<gene>
    <name evidence="1" type="primary">fhs</name>
    <name type="ordered locus">USA300HOU_1721</name>
</gene>
<accession>A8Z2Q0</accession>
<name>FTHS_STAAT</name>
<sequence>MTHLSDLDIANQSTLQPIKDIAASVGISEDALEPYGHYKAKIDINKITPRENKGKVVLVTAMSPTPAGEGKSTVTVGLADAFHELNKNVMVALREPALGPTFGIKGGATGGGYAQVLPMEDINLHFNGDFHAITTANNALSAFIDNHIHQGNELGIDQRRIEWKRVLDMNDRALRHVNVGLGGPTNGVPREDGFNITVASEIMAILCLSRSIKDLKDKISRITIGYTRDRKPVTVADLKVEGALAMILKDAIKPNLVQSIEGTPALVHGGPFANIAHGCNSILATETARDLADIVVTEAGFGSDLGAEKFMDIKVREAGFDPAAVVVVATIRALKMHGGVAKDNLKEENVEAVKAGIVNLERHVNNIKKFGVEPVVAINAFIHDTDAEVEYVKSWAKENNVRIALTEVWKKGGKGGVDLANEVLEVIDQPNSFKPLYELELPLEQKIEKIVTEIYGGSKVTFSSKAQKQLKQFKENGWDNYPVCMAKTQYSFSDDQTLLGAPSGFEITIRELEAKTGAGFIVALTGAIMTMPGLPKKPAALNMDVTDDGHAIGLF</sequence>
<reference key="1">
    <citation type="journal article" date="2007" name="BMC Microbiol.">
        <title>Subtle genetic changes enhance virulence of methicillin resistant and sensitive Staphylococcus aureus.</title>
        <authorList>
            <person name="Highlander S.K."/>
            <person name="Hulten K.G."/>
            <person name="Qin X."/>
            <person name="Jiang H."/>
            <person name="Yerrapragada S."/>
            <person name="Mason E.O. Jr."/>
            <person name="Shang Y."/>
            <person name="Williams T.M."/>
            <person name="Fortunov R.M."/>
            <person name="Liu Y."/>
            <person name="Igboeli O."/>
            <person name="Petrosino J."/>
            <person name="Tirumalai M."/>
            <person name="Uzman A."/>
            <person name="Fox G.E."/>
            <person name="Cardenas A.M."/>
            <person name="Muzny D.M."/>
            <person name="Hemphill L."/>
            <person name="Ding Y."/>
            <person name="Dugan S."/>
            <person name="Blyth P.R."/>
            <person name="Buhay C.J."/>
            <person name="Dinh H.H."/>
            <person name="Hawes A.C."/>
            <person name="Holder M."/>
            <person name="Kovar C.L."/>
            <person name="Lee S.L."/>
            <person name="Liu W."/>
            <person name="Nazareth L.V."/>
            <person name="Wang Q."/>
            <person name="Zhou J."/>
            <person name="Kaplan S.L."/>
            <person name="Weinstock G.M."/>
        </authorList>
    </citation>
    <scope>NUCLEOTIDE SEQUENCE [LARGE SCALE GENOMIC DNA]</scope>
    <source>
        <strain>USA300 / TCH1516</strain>
    </source>
</reference>
<dbReference type="EC" id="6.3.4.3" evidence="1"/>
<dbReference type="EMBL" id="CP000730">
    <property type="protein sequence ID" value="ABX29728.1"/>
    <property type="status" value="ALT_INIT"/>
    <property type="molecule type" value="Genomic_DNA"/>
</dbReference>
<dbReference type="RefSeq" id="WP_000149404.1">
    <property type="nucleotide sequence ID" value="NC_010079.1"/>
</dbReference>
<dbReference type="SMR" id="A8Z2Q0"/>
<dbReference type="KEGG" id="sax:USA300HOU_1721"/>
<dbReference type="HOGENOM" id="CLU_003601_3_3_9"/>
<dbReference type="UniPathway" id="UPA00193"/>
<dbReference type="GO" id="GO:0005524">
    <property type="term" value="F:ATP binding"/>
    <property type="evidence" value="ECO:0007669"/>
    <property type="project" value="UniProtKB-UniRule"/>
</dbReference>
<dbReference type="GO" id="GO:0004329">
    <property type="term" value="F:formate-tetrahydrofolate ligase activity"/>
    <property type="evidence" value="ECO:0007669"/>
    <property type="project" value="UniProtKB-UniRule"/>
</dbReference>
<dbReference type="GO" id="GO:0035999">
    <property type="term" value="P:tetrahydrofolate interconversion"/>
    <property type="evidence" value="ECO:0007669"/>
    <property type="project" value="UniProtKB-UniRule"/>
</dbReference>
<dbReference type="CDD" id="cd00477">
    <property type="entry name" value="FTHFS"/>
    <property type="match status" value="1"/>
</dbReference>
<dbReference type="FunFam" id="3.30.1510.10:FF:000001">
    <property type="entry name" value="Formate--tetrahydrofolate ligase"/>
    <property type="match status" value="1"/>
</dbReference>
<dbReference type="FunFam" id="3.10.410.10:FF:000001">
    <property type="entry name" value="Putative formate--tetrahydrofolate ligase"/>
    <property type="match status" value="1"/>
</dbReference>
<dbReference type="Gene3D" id="3.30.1510.10">
    <property type="entry name" value="Domain 2, N(10)-formyltetrahydrofolate synthetase"/>
    <property type="match status" value="1"/>
</dbReference>
<dbReference type="Gene3D" id="3.10.410.10">
    <property type="entry name" value="Formyltetrahydrofolate synthetase, domain 3"/>
    <property type="match status" value="1"/>
</dbReference>
<dbReference type="Gene3D" id="3.40.50.300">
    <property type="entry name" value="P-loop containing nucleotide triphosphate hydrolases"/>
    <property type="match status" value="1"/>
</dbReference>
<dbReference type="HAMAP" id="MF_01543">
    <property type="entry name" value="FTHFS"/>
    <property type="match status" value="1"/>
</dbReference>
<dbReference type="InterPro" id="IPR000559">
    <property type="entry name" value="Formate_THF_ligase"/>
</dbReference>
<dbReference type="InterPro" id="IPR020628">
    <property type="entry name" value="Formate_THF_ligase_CS"/>
</dbReference>
<dbReference type="InterPro" id="IPR027417">
    <property type="entry name" value="P-loop_NTPase"/>
</dbReference>
<dbReference type="NCBIfam" id="NF010030">
    <property type="entry name" value="PRK13505.1"/>
    <property type="match status" value="1"/>
</dbReference>
<dbReference type="Pfam" id="PF01268">
    <property type="entry name" value="FTHFS"/>
    <property type="match status" value="1"/>
</dbReference>
<dbReference type="SUPFAM" id="SSF52540">
    <property type="entry name" value="P-loop containing nucleoside triphosphate hydrolases"/>
    <property type="match status" value="1"/>
</dbReference>
<dbReference type="PROSITE" id="PS00721">
    <property type="entry name" value="FTHFS_1"/>
    <property type="match status" value="1"/>
</dbReference>
<dbReference type="PROSITE" id="PS00722">
    <property type="entry name" value="FTHFS_2"/>
    <property type="match status" value="1"/>
</dbReference>
<feature type="chain" id="PRO_0000333317" description="Formate--tetrahydrofolate ligase">
    <location>
        <begin position="1"/>
        <end position="555"/>
    </location>
</feature>
<feature type="binding site" evidence="1">
    <location>
        <begin position="65"/>
        <end position="72"/>
    </location>
    <ligand>
        <name>ATP</name>
        <dbReference type="ChEBI" id="CHEBI:30616"/>
    </ligand>
</feature>
<protein>
    <recommendedName>
        <fullName evidence="1">Formate--tetrahydrofolate ligase</fullName>
        <ecNumber evidence="1">6.3.4.3</ecNumber>
    </recommendedName>
    <alternativeName>
        <fullName evidence="1">Formyltetrahydrofolate synthetase</fullName>
        <shortName evidence="1">FHS</shortName>
        <shortName evidence="1">FTHFS</shortName>
    </alternativeName>
</protein>
<keyword id="KW-0067">ATP-binding</keyword>
<keyword id="KW-0436">Ligase</keyword>
<keyword id="KW-0547">Nucleotide-binding</keyword>
<keyword id="KW-0554">One-carbon metabolism</keyword>
<evidence type="ECO:0000255" key="1">
    <source>
        <dbReference type="HAMAP-Rule" id="MF_01543"/>
    </source>
</evidence>
<evidence type="ECO:0000305" key="2"/>
<proteinExistence type="inferred from homology"/>
<comment type="catalytic activity">
    <reaction evidence="1">
        <text>(6S)-5,6,7,8-tetrahydrofolate + formate + ATP = (6R)-10-formyltetrahydrofolate + ADP + phosphate</text>
        <dbReference type="Rhea" id="RHEA:20221"/>
        <dbReference type="ChEBI" id="CHEBI:15740"/>
        <dbReference type="ChEBI" id="CHEBI:30616"/>
        <dbReference type="ChEBI" id="CHEBI:43474"/>
        <dbReference type="ChEBI" id="CHEBI:57453"/>
        <dbReference type="ChEBI" id="CHEBI:195366"/>
        <dbReference type="ChEBI" id="CHEBI:456216"/>
        <dbReference type="EC" id="6.3.4.3"/>
    </reaction>
</comment>
<comment type="pathway">
    <text evidence="1">One-carbon metabolism; tetrahydrofolate interconversion.</text>
</comment>
<comment type="similarity">
    <text evidence="1">Belongs to the formate--tetrahydrofolate ligase family.</text>
</comment>
<comment type="sequence caution" evidence="2">
    <conflict type="erroneous initiation">
        <sequence resource="EMBL-CDS" id="ABX29728"/>
    </conflict>
</comment>
<organism>
    <name type="scientific">Staphylococcus aureus (strain USA300 / TCH1516)</name>
    <dbReference type="NCBI Taxonomy" id="451516"/>
    <lineage>
        <taxon>Bacteria</taxon>
        <taxon>Bacillati</taxon>
        <taxon>Bacillota</taxon>
        <taxon>Bacilli</taxon>
        <taxon>Bacillales</taxon>
        <taxon>Staphylococcaceae</taxon>
        <taxon>Staphylococcus</taxon>
    </lineage>
</organism>